<sequence>MDSQRNLLVIALLFVSFMIWQAWEQDKNPQPQAQQTTQTTTTAAGSAADQGVPASGQGKLISVKTDVLDLTINTRGGDVEQALLPAYPKELNSTQPFQLLETSPQFIYQAQSGLTGRDGPDNPANGPRPLYNVEKDAYVLAEGQNELQVPMTYTDAAGNTFTKTFVLKRGDYAVNVNYNVQNAGEKPLEISTFGQLKQSITLPPHLDTGSSNFALHTFRGAAYSTPDEKYEKYKFDTIADNENLNISSKGGWVAMLQQYFATAWIPHNDGTNNFYTANLGNGIAAIGYKSQPVLVQPGQTGAMNSTLWVGPEIQDKMAAVAPHLDLTVDYGWLWFISQPLFKLLKWIHSFVGNWGFSIIIITFIVRGIMYPLTKAQYTSMAKMRMLQPKIQAMRERLGDDKQRISQEMMALYKAEKVNPLGGCFPLLIQMPIFLALYYMLMGSVELRQAPFALWIHDLSAQDPYYILPILMGVTMFFIQKMSPTTVTDPMQQKIMTFMPVIFTVFFLWFPSGLVLYYIVSNLVTIIQQQLIYRGLEKRGLHSREKKKS</sequence>
<reference key="1">
    <citation type="journal article" date="2008" name="DNA Res.">
        <title>Complete genome sequence and comparative analysis of the wild-type commensal Escherichia coli strain SE11 isolated from a healthy adult.</title>
        <authorList>
            <person name="Oshima K."/>
            <person name="Toh H."/>
            <person name="Ogura Y."/>
            <person name="Sasamoto H."/>
            <person name="Morita H."/>
            <person name="Park S.-H."/>
            <person name="Ooka T."/>
            <person name="Iyoda S."/>
            <person name="Taylor T.D."/>
            <person name="Hayashi T."/>
            <person name="Itoh K."/>
            <person name="Hattori M."/>
        </authorList>
    </citation>
    <scope>NUCLEOTIDE SEQUENCE [LARGE SCALE GENOMIC DNA]</scope>
    <source>
        <strain>SE11</strain>
    </source>
</reference>
<accession>B6I3T8</accession>
<proteinExistence type="inferred from homology"/>
<keyword id="KW-0997">Cell inner membrane</keyword>
<keyword id="KW-1003">Cell membrane</keyword>
<keyword id="KW-0143">Chaperone</keyword>
<keyword id="KW-0472">Membrane</keyword>
<keyword id="KW-0653">Protein transport</keyword>
<keyword id="KW-0812">Transmembrane</keyword>
<keyword id="KW-1133">Transmembrane helix</keyword>
<keyword id="KW-0813">Transport</keyword>
<protein>
    <recommendedName>
        <fullName evidence="1">Membrane protein insertase YidC</fullName>
    </recommendedName>
    <alternativeName>
        <fullName evidence="1">Foldase YidC</fullName>
    </alternativeName>
    <alternativeName>
        <fullName evidence="1">Membrane integrase YidC</fullName>
    </alternativeName>
    <alternativeName>
        <fullName evidence="1">Membrane protein YidC</fullName>
    </alternativeName>
</protein>
<gene>
    <name evidence="1" type="primary">yidC</name>
    <name type="ordered locus">ECSE_3991</name>
</gene>
<feature type="chain" id="PRO_1000187664" description="Membrane protein insertase YidC">
    <location>
        <begin position="1"/>
        <end position="548"/>
    </location>
</feature>
<feature type="transmembrane region" description="Helical" evidence="1">
    <location>
        <begin position="6"/>
        <end position="26"/>
    </location>
</feature>
<feature type="transmembrane region" description="Helical" evidence="1">
    <location>
        <begin position="350"/>
        <end position="370"/>
    </location>
</feature>
<feature type="transmembrane region" description="Helical" evidence="1">
    <location>
        <begin position="420"/>
        <end position="440"/>
    </location>
</feature>
<feature type="transmembrane region" description="Helical" evidence="1">
    <location>
        <begin position="458"/>
        <end position="478"/>
    </location>
</feature>
<feature type="transmembrane region" description="Helical" evidence="1">
    <location>
        <begin position="499"/>
        <end position="519"/>
    </location>
</feature>
<feature type="region of interest" description="Disordered" evidence="2">
    <location>
        <begin position="28"/>
        <end position="55"/>
    </location>
</feature>
<feature type="compositionally biased region" description="Low complexity" evidence="2">
    <location>
        <begin position="30"/>
        <end position="50"/>
    </location>
</feature>
<name>YIDC_ECOSE</name>
<dbReference type="EMBL" id="AP009240">
    <property type="protein sequence ID" value="BAG79515.1"/>
    <property type="molecule type" value="Genomic_DNA"/>
</dbReference>
<dbReference type="RefSeq" id="WP_000378258.1">
    <property type="nucleotide sequence ID" value="NC_011415.1"/>
</dbReference>
<dbReference type="SMR" id="B6I3T8"/>
<dbReference type="GeneID" id="93778448"/>
<dbReference type="KEGG" id="ecy:ECSE_3991"/>
<dbReference type="HOGENOM" id="CLU_016535_3_0_6"/>
<dbReference type="Proteomes" id="UP000008199">
    <property type="component" value="Chromosome"/>
</dbReference>
<dbReference type="GO" id="GO:0005886">
    <property type="term" value="C:plasma membrane"/>
    <property type="evidence" value="ECO:0007669"/>
    <property type="project" value="UniProtKB-SubCell"/>
</dbReference>
<dbReference type="GO" id="GO:0032977">
    <property type="term" value="F:membrane insertase activity"/>
    <property type="evidence" value="ECO:0007669"/>
    <property type="project" value="InterPro"/>
</dbReference>
<dbReference type="GO" id="GO:0051205">
    <property type="term" value="P:protein insertion into membrane"/>
    <property type="evidence" value="ECO:0007669"/>
    <property type="project" value="TreeGrafter"/>
</dbReference>
<dbReference type="GO" id="GO:0015031">
    <property type="term" value="P:protein transport"/>
    <property type="evidence" value="ECO:0007669"/>
    <property type="project" value="UniProtKB-KW"/>
</dbReference>
<dbReference type="CDD" id="cd20070">
    <property type="entry name" value="5TM_YidC_Alb3"/>
    <property type="match status" value="1"/>
</dbReference>
<dbReference type="CDD" id="cd19961">
    <property type="entry name" value="EcYidC-like_peri"/>
    <property type="match status" value="1"/>
</dbReference>
<dbReference type="FunFam" id="2.70.98.90:FF:000001">
    <property type="entry name" value="Membrane protein insertase YidC"/>
    <property type="match status" value="1"/>
</dbReference>
<dbReference type="Gene3D" id="2.70.98.90">
    <property type="match status" value="1"/>
</dbReference>
<dbReference type="HAMAP" id="MF_01810">
    <property type="entry name" value="YidC_type1"/>
    <property type="match status" value="1"/>
</dbReference>
<dbReference type="InterPro" id="IPR019998">
    <property type="entry name" value="Membr_insert_YidC"/>
</dbReference>
<dbReference type="InterPro" id="IPR028053">
    <property type="entry name" value="Membr_insert_YidC_N"/>
</dbReference>
<dbReference type="InterPro" id="IPR001708">
    <property type="entry name" value="YidC/ALB3/OXA1/COX18"/>
</dbReference>
<dbReference type="InterPro" id="IPR028055">
    <property type="entry name" value="YidC/Oxa/ALB_C"/>
</dbReference>
<dbReference type="InterPro" id="IPR047196">
    <property type="entry name" value="YidC_ALB_C"/>
</dbReference>
<dbReference type="InterPro" id="IPR038221">
    <property type="entry name" value="YidC_periplasmic_sf"/>
</dbReference>
<dbReference type="NCBIfam" id="NF002351">
    <property type="entry name" value="PRK01318.1-1"/>
    <property type="match status" value="1"/>
</dbReference>
<dbReference type="NCBIfam" id="NF002352">
    <property type="entry name" value="PRK01318.1-3"/>
    <property type="match status" value="1"/>
</dbReference>
<dbReference type="NCBIfam" id="NF002353">
    <property type="entry name" value="PRK01318.1-4"/>
    <property type="match status" value="1"/>
</dbReference>
<dbReference type="NCBIfam" id="TIGR03593">
    <property type="entry name" value="yidC_nterm"/>
    <property type="match status" value="1"/>
</dbReference>
<dbReference type="NCBIfam" id="TIGR03592">
    <property type="entry name" value="yidC_oxa1_cterm"/>
    <property type="match status" value="1"/>
</dbReference>
<dbReference type="PANTHER" id="PTHR12428:SF65">
    <property type="entry name" value="CYTOCHROME C OXIDASE ASSEMBLY PROTEIN COX18, MITOCHONDRIAL"/>
    <property type="match status" value="1"/>
</dbReference>
<dbReference type="PANTHER" id="PTHR12428">
    <property type="entry name" value="OXA1"/>
    <property type="match status" value="1"/>
</dbReference>
<dbReference type="Pfam" id="PF02096">
    <property type="entry name" value="60KD_IMP"/>
    <property type="match status" value="1"/>
</dbReference>
<dbReference type="Pfam" id="PF14849">
    <property type="entry name" value="YidC_periplas"/>
    <property type="match status" value="1"/>
</dbReference>
<dbReference type="PRINTS" id="PR00701">
    <property type="entry name" value="60KDINNERMP"/>
</dbReference>
<dbReference type="PRINTS" id="PR01900">
    <property type="entry name" value="YIDCPROTEIN"/>
</dbReference>
<comment type="function">
    <text evidence="1">Required for the insertion and/or proper folding and/or complex formation of integral membrane proteins into the membrane. Involved in integration of membrane proteins that insert both dependently and independently of the Sec translocase complex, as well as at least some lipoproteins. Aids folding of multispanning membrane proteins.</text>
</comment>
<comment type="subunit">
    <text evidence="1">Interacts with the Sec translocase complex via SecD. Specifically interacts with transmembrane segments of nascent integral membrane proteins during membrane integration.</text>
</comment>
<comment type="subcellular location">
    <subcellularLocation>
        <location evidence="1">Cell inner membrane</location>
        <topology evidence="1">Multi-pass membrane protein</topology>
    </subcellularLocation>
</comment>
<comment type="similarity">
    <text evidence="1">Belongs to the OXA1/ALB3/YidC family. Type 1 subfamily.</text>
</comment>
<evidence type="ECO:0000255" key="1">
    <source>
        <dbReference type="HAMAP-Rule" id="MF_01810"/>
    </source>
</evidence>
<evidence type="ECO:0000256" key="2">
    <source>
        <dbReference type="SAM" id="MobiDB-lite"/>
    </source>
</evidence>
<organism>
    <name type="scientific">Escherichia coli (strain SE11)</name>
    <dbReference type="NCBI Taxonomy" id="409438"/>
    <lineage>
        <taxon>Bacteria</taxon>
        <taxon>Pseudomonadati</taxon>
        <taxon>Pseudomonadota</taxon>
        <taxon>Gammaproteobacteria</taxon>
        <taxon>Enterobacterales</taxon>
        <taxon>Enterobacteriaceae</taxon>
        <taxon>Escherichia</taxon>
    </lineage>
</organism>